<sequence length="1060" mass="119316">MPTIPGFSQIQFEGFCRFIDQGLTEELHKFPKIEDTDQEIEFQLFVETYQLVEPLIKERDAVYESLTYSSELYVSAGLIWKTGRDMQEQTIFIGNIPLMNSLGNSIVSGIYRIVINQILQSPGIYYRSELDHNGISVYTGTIISDWGGRPELEIDRKARIWARVSRKQKISILVPSSAMGSNLREILDNVCYPEIFLSFPNDKEKKKIGSRENAILEFYKQFACVGGDPVFSESLCKELQKKFFQQRCELGRIGRRNMNRRLNIDIPQNNTFLLPRDVLAVVDHLIGMKFGMGTLDDMNHLKNKRIRSVADLLQDQFGLALVRLENAVRGTICGAIRHKLIPTPHNLVTSTPLTTTYESFFGLHPLSQVLDRTNPLTQIVHGRKSSYLGPGGLTGRTASFRIRDIHPSHYGRICPIDTSEGINVGLIGSLAIHARIGHWGSIESPFYEISEKSKEIVYLPPSRDEYYMVAAGNSLALNRGIQEEQVVPARYRQEFLTIAWEQIHLRSIFPFQYFSIGASLIPFIEHNDANRALMSSNMQRQAVPLSRSEKCIVGTGLEGQAALDSGVSAIAEHEGKIIYTDTDKIVLSGNRDTISIPLVMYQRSNKNTCMHQKPRVPRGKCIKKGQILADGAATVGGELALGKNVLVAHMPWEGYNSEDAVLISERLIYGDIYTSFHIRKYEIQTHVTSQGPERITNEIPHLEAHLLRNLDKNGIVMLGSWIERGDILVGKLTPQAAKESSYAPEDRLLRAILGIQVSTAKETCLKLPIGGRGRVIDVRWIQKKGGSSYNPETIRVSILQKREIKVGDKVAGRHGNKGIVSKILPRQDMPYLQDGTPVDMVFNPLGVPSRMNVGQMFECSLGLAGYLLDKHYRIAPFDERYEQEASRKLVFPELYSASKQTVNPWVFEPEYPGKSRIFDGRTGDPFEQPVIIGKSYILKLIHQVDDKIHGRSSGHYALVTQQPLRGRAKQGGQRVGEMEVWALEGFGVAHISQEMLTYKSDHIRARQEVLGATIIGGTIPKPEDAPESFRLLVRELRSLALELNHFLVSEKNFQINRKEA</sequence>
<organism>
    <name type="scientific">Calycanthus floridus var. glaucus</name>
    <name type="common">Eastern sweetshrub</name>
    <name type="synonym">Calycanthus fertilis var. ferax</name>
    <dbReference type="NCBI Taxonomy" id="212734"/>
    <lineage>
        <taxon>Eukaryota</taxon>
        <taxon>Viridiplantae</taxon>
        <taxon>Streptophyta</taxon>
        <taxon>Embryophyta</taxon>
        <taxon>Tracheophyta</taxon>
        <taxon>Spermatophyta</taxon>
        <taxon>Magnoliopsida</taxon>
        <taxon>Magnoliidae</taxon>
        <taxon>Laurales</taxon>
        <taxon>Calycanthaceae</taxon>
        <taxon>Calycanthus</taxon>
    </lineage>
</organism>
<dbReference type="EC" id="2.7.7.6" evidence="1"/>
<dbReference type="EMBL" id="AJ428413">
    <property type="protein sequence ID" value="CAD28713.1"/>
    <property type="molecule type" value="Genomic_DNA"/>
</dbReference>
<dbReference type="RefSeq" id="NP_862746.2">
    <property type="nucleotide sequence ID" value="NC_004993.1"/>
</dbReference>
<dbReference type="SMR" id="Q7YJX8"/>
<dbReference type="GeneID" id="2598032"/>
<dbReference type="GO" id="GO:0009507">
    <property type="term" value="C:chloroplast"/>
    <property type="evidence" value="ECO:0007669"/>
    <property type="project" value="UniProtKB-SubCell"/>
</dbReference>
<dbReference type="GO" id="GO:0000428">
    <property type="term" value="C:DNA-directed RNA polymerase complex"/>
    <property type="evidence" value="ECO:0007669"/>
    <property type="project" value="UniProtKB-KW"/>
</dbReference>
<dbReference type="GO" id="GO:0005739">
    <property type="term" value="C:mitochondrion"/>
    <property type="evidence" value="ECO:0007669"/>
    <property type="project" value="GOC"/>
</dbReference>
<dbReference type="GO" id="GO:0003677">
    <property type="term" value="F:DNA binding"/>
    <property type="evidence" value="ECO:0007669"/>
    <property type="project" value="UniProtKB-UniRule"/>
</dbReference>
<dbReference type="GO" id="GO:0003899">
    <property type="term" value="F:DNA-directed RNA polymerase activity"/>
    <property type="evidence" value="ECO:0007669"/>
    <property type="project" value="UniProtKB-UniRule"/>
</dbReference>
<dbReference type="GO" id="GO:0032549">
    <property type="term" value="F:ribonucleoside binding"/>
    <property type="evidence" value="ECO:0007669"/>
    <property type="project" value="InterPro"/>
</dbReference>
<dbReference type="GO" id="GO:0006351">
    <property type="term" value="P:DNA-templated transcription"/>
    <property type="evidence" value="ECO:0007669"/>
    <property type="project" value="UniProtKB-UniRule"/>
</dbReference>
<dbReference type="CDD" id="cd00653">
    <property type="entry name" value="RNA_pol_B_RPB2"/>
    <property type="match status" value="1"/>
</dbReference>
<dbReference type="FunFam" id="3.90.1110.10:FF:000009">
    <property type="entry name" value="DNA-directed RNA polymerase subunit beta"/>
    <property type="match status" value="1"/>
</dbReference>
<dbReference type="Gene3D" id="2.40.50.100">
    <property type="match status" value="1"/>
</dbReference>
<dbReference type="Gene3D" id="2.40.50.150">
    <property type="match status" value="1"/>
</dbReference>
<dbReference type="Gene3D" id="3.90.1100.10">
    <property type="match status" value="1"/>
</dbReference>
<dbReference type="Gene3D" id="2.30.150.10">
    <property type="entry name" value="DNA-directed RNA polymerase, beta subunit, external 1 domain"/>
    <property type="match status" value="1"/>
</dbReference>
<dbReference type="Gene3D" id="2.40.270.10">
    <property type="entry name" value="DNA-directed RNA polymerase, subunit 2, domain 6"/>
    <property type="match status" value="2"/>
</dbReference>
<dbReference type="Gene3D" id="3.90.1800.10">
    <property type="entry name" value="RNA polymerase alpha subunit dimerisation domain"/>
    <property type="match status" value="1"/>
</dbReference>
<dbReference type="Gene3D" id="3.90.1110.10">
    <property type="entry name" value="RNA polymerase Rpb2, domain 2"/>
    <property type="match status" value="1"/>
</dbReference>
<dbReference type="HAMAP" id="MF_01321">
    <property type="entry name" value="RNApol_bact_RpoB"/>
    <property type="match status" value="1"/>
</dbReference>
<dbReference type="InterPro" id="IPR042107">
    <property type="entry name" value="DNA-dir_RNA_pol_bsu_ext_1_sf"/>
</dbReference>
<dbReference type="InterPro" id="IPR015712">
    <property type="entry name" value="DNA-dir_RNA_pol_su2"/>
</dbReference>
<dbReference type="InterPro" id="IPR007120">
    <property type="entry name" value="DNA-dir_RNAP_su2_dom"/>
</dbReference>
<dbReference type="InterPro" id="IPR037033">
    <property type="entry name" value="DNA-dir_RNAP_su2_hyb_sf"/>
</dbReference>
<dbReference type="InterPro" id="IPR010243">
    <property type="entry name" value="RNA_pol_bsu_bac"/>
</dbReference>
<dbReference type="InterPro" id="IPR007121">
    <property type="entry name" value="RNA_pol_bsu_CS"/>
</dbReference>
<dbReference type="InterPro" id="IPR007642">
    <property type="entry name" value="RNA_pol_Rpb2_2"/>
</dbReference>
<dbReference type="InterPro" id="IPR037034">
    <property type="entry name" value="RNA_pol_Rpb2_2_sf"/>
</dbReference>
<dbReference type="InterPro" id="IPR007645">
    <property type="entry name" value="RNA_pol_Rpb2_3"/>
</dbReference>
<dbReference type="InterPro" id="IPR007641">
    <property type="entry name" value="RNA_pol_Rpb2_7"/>
</dbReference>
<dbReference type="InterPro" id="IPR014724">
    <property type="entry name" value="RNA_pol_RPB2_OB-fold"/>
</dbReference>
<dbReference type="NCBIfam" id="NF001616">
    <property type="entry name" value="PRK00405.1"/>
    <property type="match status" value="1"/>
</dbReference>
<dbReference type="PANTHER" id="PTHR20856">
    <property type="entry name" value="DNA-DIRECTED RNA POLYMERASE I SUBUNIT 2"/>
    <property type="match status" value="1"/>
</dbReference>
<dbReference type="Pfam" id="PF04561">
    <property type="entry name" value="RNA_pol_Rpb2_2"/>
    <property type="match status" value="1"/>
</dbReference>
<dbReference type="Pfam" id="PF04565">
    <property type="entry name" value="RNA_pol_Rpb2_3"/>
    <property type="match status" value="1"/>
</dbReference>
<dbReference type="Pfam" id="PF00562">
    <property type="entry name" value="RNA_pol_Rpb2_6"/>
    <property type="match status" value="1"/>
</dbReference>
<dbReference type="Pfam" id="PF04560">
    <property type="entry name" value="RNA_pol_Rpb2_7"/>
    <property type="match status" value="1"/>
</dbReference>
<dbReference type="SUPFAM" id="SSF64484">
    <property type="entry name" value="beta and beta-prime subunits of DNA dependent RNA-polymerase"/>
    <property type="match status" value="1"/>
</dbReference>
<dbReference type="PROSITE" id="PS01166">
    <property type="entry name" value="RNA_POL_BETA"/>
    <property type="match status" value="1"/>
</dbReference>
<name>RPOB_CALFG</name>
<feature type="chain" id="PRO_0000048014" description="DNA-directed RNA polymerase subunit beta">
    <location>
        <begin position="1"/>
        <end position="1060"/>
    </location>
</feature>
<proteinExistence type="inferred from homology"/>
<gene>
    <name evidence="1" type="primary">rpoB</name>
</gene>
<keyword id="KW-0150">Chloroplast</keyword>
<keyword id="KW-0240">DNA-directed RNA polymerase</keyword>
<keyword id="KW-0548">Nucleotidyltransferase</keyword>
<keyword id="KW-0934">Plastid</keyword>
<keyword id="KW-0804">Transcription</keyword>
<keyword id="KW-0808">Transferase</keyword>
<comment type="function">
    <text evidence="1">DNA-dependent RNA polymerase catalyzes the transcription of DNA into RNA using the four ribonucleoside triphosphates as substrates.</text>
</comment>
<comment type="catalytic activity">
    <reaction evidence="1">
        <text>RNA(n) + a ribonucleoside 5'-triphosphate = RNA(n+1) + diphosphate</text>
        <dbReference type="Rhea" id="RHEA:21248"/>
        <dbReference type="Rhea" id="RHEA-COMP:14527"/>
        <dbReference type="Rhea" id="RHEA-COMP:17342"/>
        <dbReference type="ChEBI" id="CHEBI:33019"/>
        <dbReference type="ChEBI" id="CHEBI:61557"/>
        <dbReference type="ChEBI" id="CHEBI:140395"/>
        <dbReference type="EC" id="2.7.7.6"/>
    </reaction>
</comment>
<comment type="subunit">
    <text evidence="1">In plastids the minimal PEP RNA polymerase catalytic core is composed of four subunits: alpha, beta, beta', and beta''. When a (nuclear-encoded) sigma factor is associated with the core the holoenzyme is formed, which can initiate transcription.</text>
</comment>
<comment type="subcellular location">
    <subcellularLocation>
        <location>Plastid</location>
        <location>Chloroplast</location>
    </subcellularLocation>
</comment>
<comment type="similarity">
    <text evidence="1">Belongs to the RNA polymerase beta chain family.</text>
</comment>
<geneLocation type="chloroplast"/>
<accession>Q7YJX8</accession>
<evidence type="ECO:0000255" key="1">
    <source>
        <dbReference type="HAMAP-Rule" id="MF_01321"/>
    </source>
</evidence>
<protein>
    <recommendedName>
        <fullName evidence="1">DNA-directed RNA polymerase subunit beta</fullName>
        <ecNumber evidence="1">2.7.7.6</ecNumber>
    </recommendedName>
    <alternativeName>
        <fullName evidence="1">PEP</fullName>
    </alternativeName>
    <alternativeName>
        <fullName evidence="1">Plastid-encoded RNA polymerase subunit beta</fullName>
        <shortName evidence="1">RNA polymerase subunit beta</shortName>
    </alternativeName>
</protein>
<reference key="1">
    <citation type="journal article" date="2003" name="Plant Syst. Evol.">
        <title>The chloroplast genome of the 'basal' angiosperm Calycanthus fertilis -- structural and phylogenetic analyses.</title>
        <authorList>
            <person name="Goremykin V."/>
            <person name="Hirsch-Ernst K.I."/>
            <person name="Woelfl S."/>
            <person name="Hellwig F.H."/>
        </authorList>
    </citation>
    <scope>NUCLEOTIDE SEQUENCE [LARGE SCALE GENOMIC DNA]</scope>
</reference>